<gene>
    <name evidence="1" type="primary">gloB</name>
    <name type="ordered locus">Syncc9902_0879</name>
</gene>
<proteinExistence type="inferred from homology"/>
<comment type="function">
    <text evidence="1">Thiolesterase that catalyzes the hydrolysis of S-D-lactoyl-glutathione to form glutathione and D-lactic acid.</text>
</comment>
<comment type="catalytic activity">
    <reaction evidence="1">
        <text>an S-(2-hydroxyacyl)glutathione + H2O = a 2-hydroxy carboxylate + glutathione + H(+)</text>
        <dbReference type="Rhea" id="RHEA:21864"/>
        <dbReference type="ChEBI" id="CHEBI:15377"/>
        <dbReference type="ChEBI" id="CHEBI:15378"/>
        <dbReference type="ChEBI" id="CHEBI:57925"/>
        <dbReference type="ChEBI" id="CHEBI:58896"/>
        <dbReference type="ChEBI" id="CHEBI:71261"/>
        <dbReference type="EC" id="3.1.2.6"/>
    </reaction>
</comment>
<comment type="cofactor">
    <cofactor evidence="1">
        <name>Zn(2+)</name>
        <dbReference type="ChEBI" id="CHEBI:29105"/>
    </cofactor>
    <text evidence="1">Binds 2 Zn(2+) ions per subunit.</text>
</comment>
<comment type="pathway">
    <text evidence="1">Secondary metabolite metabolism; methylglyoxal degradation; (R)-lactate from methylglyoxal: step 2/2.</text>
</comment>
<comment type="subunit">
    <text evidence="1">Monomer.</text>
</comment>
<comment type="similarity">
    <text evidence="1">Belongs to the metallo-beta-lactamase superfamily. Glyoxalase II family.</text>
</comment>
<dbReference type="EC" id="3.1.2.6" evidence="1"/>
<dbReference type="EMBL" id="CP000097">
    <property type="protein sequence ID" value="ABB25845.1"/>
    <property type="molecule type" value="Genomic_DNA"/>
</dbReference>
<dbReference type="RefSeq" id="WP_011359682.1">
    <property type="nucleotide sequence ID" value="NC_007513.1"/>
</dbReference>
<dbReference type="SMR" id="Q3AYI2"/>
<dbReference type="STRING" id="316279.Syncc9902_0879"/>
<dbReference type="KEGG" id="sye:Syncc9902_0879"/>
<dbReference type="eggNOG" id="COG0491">
    <property type="taxonomic scope" value="Bacteria"/>
</dbReference>
<dbReference type="HOGENOM" id="CLU_030571_4_1_3"/>
<dbReference type="OrthoDB" id="9802897at2"/>
<dbReference type="UniPathway" id="UPA00619">
    <property type="reaction ID" value="UER00676"/>
</dbReference>
<dbReference type="Proteomes" id="UP000002712">
    <property type="component" value="Chromosome"/>
</dbReference>
<dbReference type="GO" id="GO:0004416">
    <property type="term" value="F:hydroxyacylglutathione hydrolase activity"/>
    <property type="evidence" value="ECO:0007669"/>
    <property type="project" value="UniProtKB-UniRule"/>
</dbReference>
<dbReference type="GO" id="GO:0046872">
    <property type="term" value="F:metal ion binding"/>
    <property type="evidence" value="ECO:0007669"/>
    <property type="project" value="UniProtKB-KW"/>
</dbReference>
<dbReference type="GO" id="GO:0019243">
    <property type="term" value="P:methylglyoxal catabolic process to D-lactate via S-lactoyl-glutathione"/>
    <property type="evidence" value="ECO:0007669"/>
    <property type="project" value="InterPro"/>
</dbReference>
<dbReference type="CDD" id="cd07723">
    <property type="entry name" value="hydroxyacylglutathione_hydrolase_MBL-fold"/>
    <property type="match status" value="1"/>
</dbReference>
<dbReference type="Gene3D" id="3.60.15.10">
    <property type="entry name" value="Ribonuclease Z/Hydroxyacylglutathione hydrolase-like"/>
    <property type="match status" value="1"/>
</dbReference>
<dbReference type="HAMAP" id="MF_01374">
    <property type="entry name" value="Glyoxalase_2"/>
    <property type="match status" value="1"/>
</dbReference>
<dbReference type="InterPro" id="IPR035680">
    <property type="entry name" value="Clx_II_MBL"/>
</dbReference>
<dbReference type="InterPro" id="IPR050110">
    <property type="entry name" value="Glyoxalase_II_hydrolase"/>
</dbReference>
<dbReference type="InterPro" id="IPR032282">
    <property type="entry name" value="HAGH_C"/>
</dbReference>
<dbReference type="InterPro" id="IPR017782">
    <property type="entry name" value="Hydroxyacylglutathione_Hdrlase"/>
</dbReference>
<dbReference type="InterPro" id="IPR001279">
    <property type="entry name" value="Metallo-B-lactamas"/>
</dbReference>
<dbReference type="InterPro" id="IPR036866">
    <property type="entry name" value="RibonucZ/Hydroxyglut_hydro"/>
</dbReference>
<dbReference type="NCBIfam" id="TIGR03413">
    <property type="entry name" value="GSH_gloB"/>
    <property type="match status" value="1"/>
</dbReference>
<dbReference type="PANTHER" id="PTHR43705">
    <property type="entry name" value="HYDROXYACYLGLUTATHIONE HYDROLASE"/>
    <property type="match status" value="1"/>
</dbReference>
<dbReference type="PANTHER" id="PTHR43705:SF1">
    <property type="entry name" value="HYDROXYACYLGLUTATHIONE HYDROLASE GLOB"/>
    <property type="match status" value="1"/>
</dbReference>
<dbReference type="Pfam" id="PF16123">
    <property type="entry name" value="HAGH_C"/>
    <property type="match status" value="1"/>
</dbReference>
<dbReference type="Pfam" id="PF00753">
    <property type="entry name" value="Lactamase_B"/>
    <property type="match status" value="1"/>
</dbReference>
<dbReference type="PIRSF" id="PIRSF005457">
    <property type="entry name" value="Glx"/>
    <property type="match status" value="1"/>
</dbReference>
<dbReference type="SMART" id="SM00849">
    <property type="entry name" value="Lactamase_B"/>
    <property type="match status" value="1"/>
</dbReference>
<dbReference type="SUPFAM" id="SSF56281">
    <property type="entry name" value="Metallo-hydrolase/oxidoreductase"/>
    <property type="match status" value="1"/>
</dbReference>
<name>GLO2_SYNS9</name>
<keyword id="KW-0378">Hydrolase</keyword>
<keyword id="KW-0479">Metal-binding</keyword>
<keyword id="KW-1185">Reference proteome</keyword>
<keyword id="KW-0862">Zinc</keyword>
<reference key="1">
    <citation type="submission" date="2005-08" db="EMBL/GenBank/DDBJ databases">
        <title>Complete sequence of Synechococcus sp. CC9902.</title>
        <authorList>
            <person name="Copeland A."/>
            <person name="Lucas S."/>
            <person name="Lapidus A."/>
            <person name="Barry K."/>
            <person name="Detter J.C."/>
            <person name="Glavina T."/>
            <person name="Hammon N."/>
            <person name="Israni S."/>
            <person name="Pitluck S."/>
            <person name="Martinez M."/>
            <person name="Schmutz J."/>
            <person name="Larimer F."/>
            <person name="Land M."/>
            <person name="Kyrpides N."/>
            <person name="Ivanova N."/>
            <person name="Richardson P."/>
        </authorList>
    </citation>
    <scope>NUCLEOTIDE SEQUENCE [LARGE SCALE GENOMIC DNA]</scope>
    <source>
        <strain>CC9902</strain>
    </source>
</reference>
<protein>
    <recommendedName>
        <fullName evidence="1">Hydroxyacylglutathione hydrolase</fullName>
        <ecNumber evidence="1">3.1.2.6</ecNumber>
    </recommendedName>
    <alternativeName>
        <fullName evidence="1">Glyoxalase II</fullName>
        <shortName evidence="1">Glx II</shortName>
    </alternativeName>
</protein>
<accession>Q3AYI2</accession>
<sequence length="251" mass="27882">MHSTLHALPVLQDNVIWIWARGKNAVVVDPAVAEPVNQWLNAHGMCLRAILQTHHHADHIGGTPDLLREWPQAEVVAATADRLRIPLQTRGVADGDVINLLGRRLEVIDVAAHTSAHIAFIIRNDDDQDPSFGPLAFCGDTLFAGGCGRLFEGSAQDMYRALQRFAALPDETLVCCAHEYTEANLRWATEQRPNDVQITTRHQTVKALRSRGDLSLPSSIGAEKRTNLFMQAETAEQLAELRSHKDHWRSS</sequence>
<evidence type="ECO:0000255" key="1">
    <source>
        <dbReference type="HAMAP-Rule" id="MF_01374"/>
    </source>
</evidence>
<feature type="chain" id="PRO_0000309715" description="Hydroxyacylglutathione hydrolase">
    <location>
        <begin position="1"/>
        <end position="251"/>
    </location>
</feature>
<feature type="binding site" evidence="1">
    <location>
        <position position="54"/>
    </location>
    <ligand>
        <name>Zn(2+)</name>
        <dbReference type="ChEBI" id="CHEBI:29105"/>
        <label>1</label>
    </ligand>
</feature>
<feature type="binding site" evidence="1">
    <location>
        <position position="56"/>
    </location>
    <ligand>
        <name>Zn(2+)</name>
        <dbReference type="ChEBI" id="CHEBI:29105"/>
        <label>1</label>
    </ligand>
</feature>
<feature type="binding site" evidence="1">
    <location>
        <position position="58"/>
    </location>
    <ligand>
        <name>Zn(2+)</name>
        <dbReference type="ChEBI" id="CHEBI:29105"/>
        <label>2</label>
    </ligand>
</feature>
<feature type="binding site" evidence="1">
    <location>
        <position position="59"/>
    </location>
    <ligand>
        <name>Zn(2+)</name>
        <dbReference type="ChEBI" id="CHEBI:29105"/>
        <label>2</label>
    </ligand>
</feature>
<feature type="binding site" evidence="1">
    <location>
        <position position="113"/>
    </location>
    <ligand>
        <name>Zn(2+)</name>
        <dbReference type="ChEBI" id="CHEBI:29105"/>
        <label>1</label>
    </ligand>
</feature>
<feature type="binding site" evidence="1">
    <location>
        <position position="140"/>
    </location>
    <ligand>
        <name>Zn(2+)</name>
        <dbReference type="ChEBI" id="CHEBI:29105"/>
        <label>1</label>
    </ligand>
</feature>
<feature type="binding site" evidence="1">
    <location>
        <position position="140"/>
    </location>
    <ligand>
        <name>Zn(2+)</name>
        <dbReference type="ChEBI" id="CHEBI:29105"/>
        <label>2</label>
    </ligand>
</feature>
<feature type="binding site" evidence="1">
    <location>
        <position position="178"/>
    </location>
    <ligand>
        <name>Zn(2+)</name>
        <dbReference type="ChEBI" id="CHEBI:29105"/>
        <label>2</label>
    </ligand>
</feature>
<organism>
    <name type="scientific">Synechococcus sp. (strain CC9902)</name>
    <dbReference type="NCBI Taxonomy" id="316279"/>
    <lineage>
        <taxon>Bacteria</taxon>
        <taxon>Bacillati</taxon>
        <taxon>Cyanobacteriota</taxon>
        <taxon>Cyanophyceae</taxon>
        <taxon>Synechococcales</taxon>
        <taxon>Synechococcaceae</taxon>
        <taxon>Synechococcus</taxon>
    </lineage>
</organism>